<organism>
    <name type="scientific">Mannheimia succiniciproducens (strain KCTC 0769BP / MBEL55E)</name>
    <dbReference type="NCBI Taxonomy" id="221988"/>
    <lineage>
        <taxon>Bacteria</taxon>
        <taxon>Pseudomonadati</taxon>
        <taxon>Pseudomonadota</taxon>
        <taxon>Gammaproteobacteria</taxon>
        <taxon>Pasteurellales</taxon>
        <taxon>Pasteurellaceae</taxon>
        <taxon>Basfia</taxon>
    </lineage>
</organism>
<evidence type="ECO:0000255" key="1">
    <source>
        <dbReference type="HAMAP-Rule" id="MF_01342"/>
    </source>
</evidence>
<evidence type="ECO:0000305" key="2"/>
<accession>Q65QW2</accession>
<protein>
    <recommendedName>
        <fullName evidence="1">Large ribosomal subunit protein uL16</fullName>
    </recommendedName>
    <alternativeName>
        <fullName evidence="2">50S ribosomal protein L16</fullName>
    </alternativeName>
</protein>
<proteinExistence type="inferred from homology"/>
<name>RL16_MANSM</name>
<keyword id="KW-0687">Ribonucleoprotein</keyword>
<keyword id="KW-0689">Ribosomal protein</keyword>
<keyword id="KW-0694">RNA-binding</keyword>
<keyword id="KW-0699">rRNA-binding</keyword>
<keyword id="KW-0820">tRNA-binding</keyword>
<comment type="function">
    <text evidence="1">Binds 23S rRNA and is also seen to make contacts with the A and possibly P site tRNAs.</text>
</comment>
<comment type="subunit">
    <text evidence="1">Part of the 50S ribosomal subunit.</text>
</comment>
<comment type="similarity">
    <text evidence="1">Belongs to the universal ribosomal protein uL16 family.</text>
</comment>
<dbReference type="EMBL" id="AE016827">
    <property type="protein sequence ID" value="AAU38648.1"/>
    <property type="molecule type" value="Genomic_DNA"/>
</dbReference>
<dbReference type="RefSeq" id="WP_011201198.1">
    <property type="nucleotide sequence ID" value="NC_006300.1"/>
</dbReference>
<dbReference type="SMR" id="Q65QW2"/>
<dbReference type="STRING" id="221988.MS2041"/>
<dbReference type="KEGG" id="msu:MS2041"/>
<dbReference type="eggNOG" id="COG0197">
    <property type="taxonomic scope" value="Bacteria"/>
</dbReference>
<dbReference type="HOGENOM" id="CLU_078858_2_1_6"/>
<dbReference type="OrthoDB" id="9802589at2"/>
<dbReference type="Proteomes" id="UP000000607">
    <property type="component" value="Chromosome"/>
</dbReference>
<dbReference type="GO" id="GO:0022625">
    <property type="term" value="C:cytosolic large ribosomal subunit"/>
    <property type="evidence" value="ECO:0007669"/>
    <property type="project" value="TreeGrafter"/>
</dbReference>
<dbReference type="GO" id="GO:0019843">
    <property type="term" value="F:rRNA binding"/>
    <property type="evidence" value="ECO:0007669"/>
    <property type="project" value="UniProtKB-UniRule"/>
</dbReference>
<dbReference type="GO" id="GO:0003735">
    <property type="term" value="F:structural constituent of ribosome"/>
    <property type="evidence" value="ECO:0007669"/>
    <property type="project" value="InterPro"/>
</dbReference>
<dbReference type="GO" id="GO:0000049">
    <property type="term" value="F:tRNA binding"/>
    <property type="evidence" value="ECO:0007669"/>
    <property type="project" value="UniProtKB-KW"/>
</dbReference>
<dbReference type="GO" id="GO:0006412">
    <property type="term" value="P:translation"/>
    <property type="evidence" value="ECO:0007669"/>
    <property type="project" value="UniProtKB-UniRule"/>
</dbReference>
<dbReference type="CDD" id="cd01433">
    <property type="entry name" value="Ribosomal_L16_L10e"/>
    <property type="match status" value="1"/>
</dbReference>
<dbReference type="FunFam" id="3.90.1170.10:FF:000001">
    <property type="entry name" value="50S ribosomal protein L16"/>
    <property type="match status" value="1"/>
</dbReference>
<dbReference type="Gene3D" id="3.90.1170.10">
    <property type="entry name" value="Ribosomal protein L10e/L16"/>
    <property type="match status" value="1"/>
</dbReference>
<dbReference type="HAMAP" id="MF_01342">
    <property type="entry name" value="Ribosomal_uL16"/>
    <property type="match status" value="1"/>
</dbReference>
<dbReference type="InterPro" id="IPR047873">
    <property type="entry name" value="Ribosomal_uL16"/>
</dbReference>
<dbReference type="InterPro" id="IPR000114">
    <property type="entry name" value="Ribosomal_uL16_bact-type"/>
</dbReference>
<dbReference type="InterPro" id="IPR020798">
    <property type="entry name" value="Ribosomal_uL16_CS"/>
</dbReference>
<dbReference type="InterPro" id="IPR016180">
    <property type="entry name" value="Ribosomal_uL16_dom"/>
</dbReference>
<dbReference type="InterPro" id="IPR036920">
    <property type="entry name" value="Ribosomal_uL16_sf"/>
</dbReference>
<dbReference type="NCBIfam" id="TIGR01164">
    <property type="entry name" value="rplP_bact"/>
    <property type="match status" value="1"/>
</dbReference>
<dbReference type="PANTHER" id="PTHR12220">
    <property type="entry name" value="50S/60S RIBOSOMAL PROTEIN L16"/>
    <property type="match status" value="1"/>
</dbReference>
<dbReference type="PANTHER" id="PTHR12220:SF13">
    <property type="entry name" value="LARGE RIBOSOMAL SUBUNIT PROTEIN UL16M"/>
    <property type="match status" value="1"/>
</dbReference>
<dbReference type="Pfam" id="PF00252">
    <property type="entry name" value="Ribosomal_L16"/>
    <property type="match status" value="1"/>
</dbReference>
<dbReference type="PRINTS" id="PR00060">
    <property type="entry name" value="RIBOSOMALL16"/>
</dbReference>
<dbReference type="SUPFAM" id="SSF54686">
    <property type="entry name" value="Ribosomal protein L16p/L10e"/>
    <property type="match status" value="1"/>
</dbReference>
<dbReference type="PROSITE" id="PS00586">
    <property type="entry name" value="RIBOSOMAL_L16_1"/>
    <property type="match status" value="1"/>
</dbReference>
<dbReference type="PROSITE" id="PS00701">
    <property type="entry name" value="RIBOSOMAL_L16_2"/>
    <property type="match status" value="1"/>
</dbReference>
<reference key="1">
    <citation type="journal article" date="2004" name="Nat. Biotechnol.">
        <title>The genome sequence of the capnophilic rumen bacterium Mannheimia succiniciproducens.</title>
        <authorList>
            <person name="Hong S.H."/>
            <person name="Kim J.S."/>
            <person name="Lee S.Y."/>
            <person name="In Y.H."/>
            <person name="Choi S.S."/>
            <person name="Rih J.-K."/>
            <person name="Kim C.H."/>
            <person name="Jeong H."/>
            <person name="Hur C.G."/>
            <person name="Kim J.J."/>
        </authorList>
    </citation>
    <scope>NUCLEOTIDE SEQUENCE [LARGE SCALE GENOMIC DNA]</scope>
    <source>
        <strain>KCTC 0769BP / MBEL55E</strain>
    </source>
</reference>
<feature type="chain" id="PRO_0000062132" description="Large ribosomal subunit protein uL16">
    <location>
        <begin position="1"/>
        <end position="136"/>
    </location>
</feature>
<sequence length="136" mass="15227">MLQPKRTKFRKVHKGRNRGIAAGTDVSFGTYGLKAIGRGRLTARQIEAARRAMTRAVKRQGKIWIRVFPDKPITEKPLEVRMGKGKGNVEYWVALIQPGKVLYEMDGVSEEIAREAFALAAAKLPIKTTFVTKTVM</sequence>
<gene>
    <name evidence="1" type="primary">rplP</name>
    <name type="ordered locus">MS2041</name>
</gene>